<dbReference type="EC" id="6.1.1.14" evidence="1"/>
<dbReference type="EMBL" id="CP000094">
    <property type="protein sequence ID" value="ABA71754.1"/>
    <property type="molecule type" value="Genomic_DNA"/>
</dbReference>
<dbReference type="RefSeq" id="WP_003187265.1">
    <property type="nucleotide sequence ID" value="NC_007492.2"/>
</dbReference>
<dbReference type="SMR" id="Q3KKF2"/>
<dbReference type="GeneID" id="97918829"/>
<dbReference type="KEGG" id="pfo:Pfl01_0010"/>
<dbReference type="eggNOG" id="COG0752">
    <property type="taxonomic scope" value="Bacteria"/>
</dbReference>
<dbReference type="HOGENOM" id="CLU_057066_1_0_6"/>
<dbReference type="Proteomes" id="UP000002704">
    <property type="component" value="Chromosome"/>
</dbReference>
<dbReference type="GO" id="GO:0005829">
    <property type="term" value="C:cytosol"/>
    <property type="evidence" value="ECO:0007669"/>
    <property type="project" value="TreeGrafter"/>
</dbReference>
<dbReference type="GO" id="GO:0005524">
    <property type="term" value="F:ATP binding"/>
    <property type="evidence" value="ECO:0007669"/>
    <property type="project" value="UniProtKB-UniRule"/>
</dbReference>
<dbReference type="GO" id="GO:0004820">
    <property type="term" value="F:glycine-tRNA ligase activity"/>
    <property type="evidence" value="ECO:0007669"/>
    <property type="project" value="UniProtKB-UniRule"/>
</dbReference>
<dbReference type="GO" id="GO:0006426">
    <property type="term" value="P:glycyl-tRNA aminoacylation"/>
    <property type="evidence" value="ECO:0007669"/>
    <property type="project" value="UniProtKB-UniRule"/>
</dbReference>
<dbReference type="CDD" id="cd00733">
    <property type="entry name" value="GlyRS_alpha_core"/>
    <property type="match status" value="1"/>
</dbReference>
<dbReference type="FunFam" id="3.30.930.10:FF:000006">
    <property type="entry name" value="Glycine--tRNA ligase alpha subunit"/>
    <property type="match status" value="1"/>
</dbReference>
<dbReference type="Gene3D" id="3.30.930.10">
    <property type="entry name" value="Bira Bifunctional Protein, Domain 2"/>
    <property type="match status" value="1"/>
</dbReference>
<dbReference type="Gene3D" id="1.20.58.180">
    <property type="entry name" value="Class II aaRS and biotin synthetases, domain 2"/>
    <property type="match status" value="1"/>
</dbReference>
<dbReference type="HAMAP" id="MF_00254">
    <property type="entry name" value="Gly_tRNA_synth_alpha"/>
    <property type="match status" value="1"/>
</dbReference>
<dbReference type="InterPro" id="IPR045864">
    <property type="entry name" value="aa-tRNA-synth_II/BPL/LPL"/>
</dbReference>
<dbReference type="InterPro" id="IPR006194">
    <property type="entry name" value="Gly-tRNA-synth_heterodimer"/>
</dbReference>
<dbReference type="InterPro" id="IPR002310">
    <property type="entry name" value="Gly-tRNA_ligase_asu"/>
</dbReference>
<dbReference type="NCBIfam" id="TIGR00388">
    <property type="entry name" value="glyQ"/>
    <property type="match status" value="1"/>
</dbReference>
<dbReference type="NCBIfam" id="NF006827">
    <property type="entry name" value="PRK09348.1"/>
    <property type="match status" value="1"/>
</dbReference>
<dbReference type="PANTHER" id="PTHR30075:SF2">
    <property type="entry name" value="GLYCINE--TRNA LIGASE, CHLOROPLASTIC_MITOCHONDRIAL 2"/>
    <property type="match status" value="1"/>
</dbReference>
<dbReference type="PANTHER" id="PTHR30075">
    <property type="entry name" value="GLYCYL-TRNA SYNTHETASE"/>
    <property type="match status" value="1"/>
</dbReference>
<dbReference type="Pfam" id="PF02091">
    <property type="entry name" value="tRNA-synt_2e"/>
    <property type="match status" value="1"/>
</dbReference>
<dbReference type="PRINTS" id="PR01044">
    <property type="entry name" value="TRNASYNTHGA"/>
</dbReference>
<dbReference type="SUPFAM" id="SSF55681">
    <property type="entry name" value="Class II aaRS and biotin synthetases"/>
    <property type="match status" value="1"/>
</dbReference>
<dbReference type="PROSITE" id="PS50861">
    <property type="entry name" value="AA_TRNA_LIGASE_II_GLYAB"/>
    <property type="match status" value="1"/>
</dbReference>
<comment type="catalytic activity">
    <reaction evidence="1">
        <text>tRNA(Gly) + glycine + ATP = glycyl-tRNA(Gly) + AMP + diphosphate</text>
        <dbReference type="Rhea" id="RHEA:16013"/>
        <dbReference type="Rhea" id="RHEA-COMP:9664"/>
        <dbReference type="Rhea" id="RHEA-COMP:9683"/>
        <dbReference type="ChEBI" id="CHEBI:30616"/>
        <dbReference type="ChEBI" id="CHEBI:33019"/>
        <dbReference type="ChEBI" id="CHEBI:57305"/>
        <dbReference type="ChEBI" id="CHEBI:78442"/>
        <dbReference type="ChEBI" id="CHEBI:78522"/>
        <dbReference type="ChEBI" id="CHEBI:456215"/>
        <dbReference type="EC" id="6.1.1.14"/>
    </reaction>
</comment>
<comment type="subunit">
    <text evidence="1">Tetramer of two alpha and two beta subunits.</text>
</comment>
<comment type="subcellular location">
    <subcellularLocation>
        <location evidence="1">Cytoplasm</location>
    </subcellularLocation>
</comment>
<comment type="similarity">
    <text evidence="1">Belongs to the class-II aminoacyl-tRNA synthetase family.</text>
</comment>
<reference key="1">
    <citation type="journal article" date="2009" name="Genome Biol.">
        <title>Genomic and genetic analyses of diversity and plant interactions of Pseudomonas fluorescens.</title>
        <authorList>
            <person name="Silby M.W."/>
            <person name="Cerdeno-Tarraga A.M."/>
            <person name="Vernikos G.S."/>
            <person name="Giddens S.R."/>
            <person name="Jackson R.W."/>
            <person name="Preston G.M."/>
            <person name="Zhang X.-X."/>
            <person name="Moon C.D."/>
            <person name="Gehrig S.M."/>
            <person name="Godfrey S.A.C."/>
            <person name="Knight C.G."/>
            <person name="Malone J.G."/>
            <person name="Robinson Z."/>
            <person name="Spiers A.J."/>
            <person name="Harris S."/>
            <person name="Challis G.L."/>
            <person name="Yaxley A.M."/>
            <person name="Harris D."/>
            <person name="Seeger K."/>
            <person name="Murphy L."/>
            <person name="Rutter S."/>
            <person name="Squares R."/>
            <person name="Quail M.A."/>
            <person name="Saunders E."/>
            <person name="Mavromatis K."/>
            <person name="Brettin T.S."/>
            <person name="Bentley S.D."/>
            <person name="Hothersall J."/>
            <person name="Stephens E."/>
            <person name="Thomas C.M."/>
            <person name="Parkhill J."/>
            <person name="Levy S.B."/>
            <person name="Rainey P.B."/>
            <person name="Thomson N.R."/>
        </authorList>
    </citation>
    <scope>NUCLEOTIDE SEQUENCE [LARGE SCALE GENOMIC DNA]</scope>
    <source>
        <strain>Pf0-1</strain>
    </source>
</reference>
<name>SYGA_PSEPF</name>
<proteinExistence type="inferred from homology"/>
<gene>
    <name evidence="1" type="primary">glyQ</name>
    <name type="ordered locus">Pfl01_0010</name>
</gene>
<sequence length="317" mass="36219">MSQPTPAVRTFQDLILALQQYWAEQGCVVLQPYDMEVGAGTFHTATFLRAIGPETWNAAYVQPSRRPTDGRYGENPNRLQHYYQFQVVLKPNPDNFQELYLGSLKHVGLDPLVHDIRFVEDNWESPTLGAWGLGWEVWLNGMEVTQFTYFQQAGGIECYPVTGEITYGLERLAMYLQGVDSVYDLVWADGPFGKVTYGDVFHQNEVEQSTYNFEHANVDKLFELFDFYESEAKRLIELDQPLPLPSYEMVLKASHTFNLLDARRAISVTARQQYILRVRTLARSVAQAYLLARAKLGFPMATPDLRDEVLAKLEAAQ</sequence>
<evidence type="ECO:0000255" key="1">
    <source>
        <dbReference type="HAMAP-Rule" id="MF_00254"/>
    </source>
</evidence>
<protein>
    <recommendedName>
        <fullName evidence="1">Glycine--tRNA ligase alpha subunit</fullName>
        <ecNumber evidence="1">6.1.1.14</ecNumber>
    </recommendedName>
    <alternativeName>
        <fullName evidence="1">Glycyl-tRNA synthetase alpha subunit</fullName>
        <shortName evidence="1">GlyRS</shortName>
    </alternativeName>
</protein>
<keyword id="KW-0030">Aminoacyl-tRNA synthetase</keyword>
<keyword id="KW-0067">ATP-binding</keyword>
<keyword id="KW-0963">Cytoplasm</keyword>
<keyword id="KW-0436">Ligase</keyword>
<keyword id="KW-0547">Nucleotide-binding</keyword>
<keyword id="KW-0648">Protein biosynthesis</keyword>
<feature type="chain" id="PRO_1000047474" description="Glycine--tRNA ligase alpha subunit">
    <location>
        <begin position="1"/>
        <end position="317"/>
    </location>
</feature>
<organism>
    <name type="scientific">Pseudomonas fluorescens (strain Pf0-1)</name>
    <dbReference type="NCBI Taxonomy" id="205922"/>
    <lineage>
        <taxon>Bacteria</taxon>
        <taxon>Pseudomonadati</taxon>
        <taxon>Pseudomonadota</taxon>
        <taxon>Gammaproteobacteria</taxon>
        <taxon>Pseudomonadales</taxon>
        <taxon>Pseudomonadaceae</taxon>
        <taxon>Pseudomonas</taxon>
    </lineage>
</organism>
<accession>Q3KKF2</accession>